<proteinExistence type="inferred from homology"/>
<accession>Q31HZ1</accession>
<keyword id="KW-0028">Amino-acid biosynthesis</keyword>
<keyword id="KW-0100">Branched-chain amino acid biosynthesis</keyword>
<keyword id="KW-0460">Magnesium</keyword>
<keyword id="KW-0479">Metal-binding</keyword>
<keyword id="KW-0521">NADP</keyword>
<keyword id="KW-0560">Oxidoreductase</keyword>
<organism>
    <name type="scientific">Hydrogenovibrio crunogenus (strain DSM 25203 / XCL-2)</name>
    <name type="common">Thiomicrospira crunogena</name>
    <dbReference type="NCBI Taxonomy" id="317025"/>
    <lineage>
        <taxon>Bacteria</taxon>
        <taxon>Pseudomonadati</taxon>
        <taxon>Pseudomonadota</taxon>
        <taxon>Gammaproteobacteria</taxon>
        <taxon>Thiotrichales</taxon>
        <taxon>Piscirickettsiaceae</taxon>
        <taxon>Hydrogenovibrio</taxon>
    </lineage>
</organism>
<sequence length="338" mass="36610">MQVYYDKDCDLSIIQGMKVAIIGFGSQGHAHAANLQDSGVDVTVGLRPGSSSIKKAEGYGLKTADVATAVAGADVVMILTPDEFQSVLYKEEIEPNIKQGAVLAFAHGFAIIYNQIEPRKDLDVIMIAPKAPGHTVRSEFVRGGGIPDLIAIQQDASGKAKEIALSYASGVGGGRTGIIETTFRDECETDLFGEQAVLCGGAVELVKAGFDTLVEAGYEPEMAYFECLHELKLIVDLMFEGGIADMNYSISNNAEYGEYVTGPRVINDESRAAMREALKNIQTGEYAKQFILEGQSNYPSMTAARRLNEEHGIEVVGRKLRAMMPWIASNKIVDQEKN</sequence>
<gene>
    <name evidence="1" type="primary">ilvC</name>
    <name type="ordered locus">Tcr_0636</name>
</gene>
<protein>
    <recommendedName>
        <fullName evidence="1">Ketol-acid reductoisomerase (NADP(+))</fullName>
        <shortName evidence="1">KARI</shortName>
        <ecNumber evidence="1">1.1.1.86</ecNumber>
    </recommendedName>
    <alternativeName>
        <fullName evidence="1">Acetohydroxy-acid isomeroreductase</fullName>
        <shortName evidence="1">AHIR</shortName>
    </alternativeName>
    <alternativeName>
        <fullName evidence="1">Alpha-keto-beta-hydroxylacyl reductoisomerase</fullName>
    </alternativeName>
    <alternativeName>
        <fullName evidence="1">Ketol-acid reductoisomerase type 1</fullName>
    </alternativeName>
    <alternativeName>
        <fullName evidence="1">Ketol-acid reductoisomerase type I</fullName>
    </alternativeName>
</protein>
<evidence type="ECO:0000255" key="1">
    <source>
        <dbReference type="HAMAP-Rule" id="MF_00435"/>
    </source>
</evidence>
<evidence type="ECO:0000255" key="2">
    <source>
        <dbReference type="PROSITE-ProRule" id="PRU01197"/>
    </source>
</evidence>
<evidence type="ECO:0000255" key="3">
    <source>
        <dbReference type="PROSITE-ProRule" id="PRU01198"/>
    </source>
</evidence>
<reference key="1">
    <citation type="journal article" date="2006" name="PLoS Biol.">
        <title>The genome of deep-sea vent chemolithoautotroph Thiomicrospira crunogena XCL-2.</title>
        <authorList>
            <person name="Scott K.M."/>
            <person name="Sievert S.M."/>
            <person name="Abril F.N."/>
            <person name="Ball L.A."/>
            <person name="Barrett C.J."/>
            <person name="Blake R.A."/>
            <person name="Boller A.J."/>
            <person name="Chain P.S.G."/>
            <person name="Clark J.A."/>
            <person name="Davis C.R."/>
            <person name="Detter C."/>
            <person name="Do K.F."/>
            <person name="Dobrinski K.P."/>
            <person name="Faza B.I."/>
            <person name="Fitzpatrick K.A."/>
            <person name="Freyermuth S.K."/>
            <person name="Harmer T.L."/>
            <person name="Hauser L.J."/>
            <person name="Huegler M."/>
            <person name="Kerfeld C.A."/>
            <person name="Klotz M.G."/>
            <person name="Kong W.W."/>
            <person name="Land M."/>
            <person name="Lapidus A."/>
            <person name="Larimer F.W."/>
            <person name="Longo D.L."/>
            <person name="Lucas S."/>
            <person name="Malfatti S.A."/>
            <person name="Massey S.E."/>
            <person name="Martin D.D."/>
            <person name="McCuddin Z."/>
            <person name="Meyer F."/>
            <person name="Moore J.L."/>
            <person name="Ocampo L.H. Jr."/>
            <person name="Paul J.H."/>
            <person name="Paulsen I.T."/>
            <person name="Reep D.K."/>
            <person name="Ren Q."/>
            <person name="Ross R.L."/>
            <person name="Sato P.Y."/>
            <person name="Thomas P."/>
            <person name="Tinkham L.E."/>
            <person name="Zeruth G.T."/>
        </authorList>
    </citation>
    <scope>NUCLEOTIDE SEQUENCE [LARGE SCALE GENOMIC DNA]</scope>
    <source>
        <strain>DSM 25203 / XCL-2</strain>
    </source>
</reference>
<dbReference type="EC" id="1.1.1.86" evidence="1"/>
<dbReference type="EMBL" id="CP000109">
    <property type="protein sequence ID" value="ABB41232.1"/>
    <property type="molecule type" value="Genomic_DNA"/>
</dbReference>
<dbReference type="SMR" id="Q31HZ1"/>
<dbReference type="STRING" id="317025.Tcr_0636"/>
<dbReference type="KEGG" id="tcx:Tcr_0636"/>
<dbReference type="eggNOG" id="COG0059">
    <property type="taxonomic scope" value="Bacteria"/>
</dbReference>
<dbReference type="HOGENOM" id="CLU_033821_0_1_6"/>
<dbReference type="OrthoDB" id="9804088at2"/>
<dbReference type="UniPathway" id="UPA00047">
    <property type="reaction ID" value="UER00056"/>
</dbReference>
<dbReference type="UniPathway" id="UPA00049">
    <property type="reaction ID" value="UER00060"/>
</dbReference>
<dbReference type="GO" id="GO:0005829">
    <property type="term" value="C:cytosol"/>
    <property type="evidence" value="ECO:0007669"/>
    <property type="project" value="TreeGrafter"/>
</dbReference>
<dbReference type="GO" id="GO:0004455">
    <property type="term" value="F:ketol-acid reductoisomerase activity"/>
    <property type="evidence" value="ECO:0007669"/>
    <property type="project" value="UniProtKB-UniRule"/>
</dbReference>
<dbReference type="GO" id="GO:0000287">
    <property type="term" value="F:magnesium ion binding"/>
    <property type="evidence" value="ECO:0007669"/>
    <property type="project" value="UniProtKB-UniRule"/>
</dbReference>
<dbReference type="GO" id="GO:0050661">
    <property type="term" value="F:NADP binding"/>
    <property type="evidence" value="ECO:0007669"/>
    <property type="project" value="InterPro"/>
</dbReference>
<dbReference type="GO" id="GO:0009097">
    <property type="term" value="P:isoleucine biosynthetic process"/>
    <property type="evidence" value="ECO:0007669"/>
    <property type="project" value="UniProtKB-UniRule"/>
</dbReference>
<dbReference type="GO" id="GO:0009099">
    <property type="term" value="P:L-valine biosynthetic process"/>
    <property type="evidence" value="ECO:0007669"/>
    <property type="project" value="UniProtKB-UniRule"/>
</dbReference>
<dbReference type="FunFam" id="3.40.50.720:FF:000023">
    <property type="entry name" value="Ketol-acid reductoisomerase (NADP(+))"/>
    <property type="match status" value="1"/>
</dbReference>
<dbReference type="Gene3D" id="6.10.240.10">
    <property type="match status" value="1"/>
</dbReference>
<dbReference type="Gene3D" id="3.40.50.720">
    <property type="entry name" value="NAD(P)-binding Rossmann-like Domain"/>
    <property type="match status" value="1"/>
</dbReference>
<dbReference type="HAMAP" id="MF_00435">
    <property type="entry name" value="IlvC"/>
    <property type="match status" value="1"/>
</dbReference>
<dbReference type="InterPro" id="IPR008927">
    <property type="entry name" value="6-PGluconate_DH-like_C_sf"/>
</dbReference>
<dbReference type="InterPro" id="IPR013023">
    <property type="entry name" value="KARI"/>
</dbReference>
<dbReference type="InterPro" id="IPR000506">
    <property type="entry name" value="KARI_C"/>
</dbReference>
<dbReference type="InterPro" id="IPR013116">
    <property type="entry name" value="KARI_N"/>
</dbReference>
<dbReference type="InterPro" id="IPR014359">
    <property type="entry name" value="KARI_prok"/>
</dbReference>
<dbReference type="InterPro" id="IPR036291">
    <property type="entry name" value="NAD(P)-bd_dom_sf"/>
</dbReference>
<dbReference type="NCBIfam" id="TIGR00465">
    <property type="entry name" value="ilvC"/>
    <property type="match status" value="1"/>
</dbReference>
<dbReference type="NCBIfam" id="NF004017">
    <property type="entry name" value="PRK05479.1"/>
    <property type="match status" value="1"/>
</dbReference>
<dbReference type="NCBIfam" id="NF009940">
    <property type="entry name" value="PRK13403.1"/>
    <property type="match status" value="1"/>
</dbReference>
<dbReference type="PANTHER" id="PTHR21371">
    <property type="entry name" value="KETOL-ACID REDUCTOISOMERASE, MITOCHONDRIAL"/>
    <property type="match status" value="1"/>
</dbReference>
<dbReference type="PANTHER" id="PTHR21371:SF1">
    <property type="entry name" value="KETOL-ACID REDUCTOISOMERASE, MITOCHONDRIAL"/>
    <property type="match status" value="1"/>
</dbReference>
<dbReference type="Pfam" id="PF01450">
    <property type="entry name" value="KARI_C"/>
    <property type="match status" value="1"/>
</dbReference>
<dbReference type="Pfam" id="PF07991">
    <property type="entry name" value="KARI_N"/>
    <property type="match status" value="1"/>
</dbReference>
<dbReference type="PIRSF" id="PIRSF000116">
    <property type="entry name" value="IlvC_gammaproteo"/>
    <property type="match status" value="1"/>
</dbReference>
<dbReference type="SUPFAM" id="SSF48179">
    <property type="entry name" value="6-phosphogluconate dehydrogenase C-terminal domain-like"/>
    <property type="match status" value="1"/>
</dbReference>
<dbReference type="SUPFAM" id="SSF51735">
    <property type="entry name" value="NAD(P)-binding Rossmann-fold domains"/>
    <property type="match status" value="1"/>
</dbReference>
<dbReference type="PROSITE" id="PS51851">
    <property type="entry name" value="KARI_C"/>
    <property type="match status" value="1"/>
</dbReference>
<dbReference type="PROSITE" id="PS51850">
    <property type="entry name" value="KARI_N"/>
    <property type="match status" value="1"/>
</dbReference>
<name>ILVC_HYDCU</name>
<feature type="chain" id="PRO_0000252798" description="Ketol-acid reductoisomerase (NADP(+))">
    <location>
        <begin position="1"/>
        <end position="338"/>
    </location>
</feature>
<feature type="domain" description="KARI N-terminal Rossmann" evidence="2">
    <location>
        <begin position="1"/>
        <end position="181"/>
    </location>
</feature>
<feature type="domain" description="KARI C-terminal knotted" evidence="3">
    <location>
        <begin position="182"/>
        <end position="327"/>
    </location>
</feature>
<feature type="active site" evidence="1">
    <location>
        <position position="107"/>
    </location>
</feature>
<feature type="binding site" evidence="1">
    <location>
        <begin position="24"/>
        <end position="27"/>
    </location>
    <ligand>
        <name>NADP(+)</name>
        <dbReference type="ChEBI" id="CHEBI:58349"/>
    </ligand>
</feature>
<feature type="binding site" evidence="1">
    <location>
        <position position="47"/>
    </location>
    <ligand>
        <name>NADP(+)</name>
        <dbReference type="ChEBI" id="CHEBI:58349"/>
    </ligand>
</feature>
<feature type="binding site" evidence="1">
    <location>
        <position position="50"/>
    </location>
    <ligand>
        <name>NADP(+)</name>
        <dbReference type="ChEBI" id="CHEBI:58349"/>
    </ligand>
</feature>
<feature type="binding site" evidence="1">
    <location>
        <position position="52"/>
    </location>
    <ligand>
        <name>NADP(+)</name>
        <dbReference type="ChEBI" id="CHEBI:58349"/>
    </ligand>
</feature>
<feature type="binding site" evidence="1">
    <location>
        <begin position="82"/>
        <end position="85"/>
    </location>
    <ligand>
        <name>NADP(+)</name>
        <dbReference type="ChEBI" id="CHEBI:58349"/>
    </ligand>
</feature>
<feature type="binding site" evidence="1">
    <location>
        <position position="133"/>
    </location>
    <ligand>
        <name>NADP(+)</name>
        <dbReference type="ChEBI" id="CHEBI:58349"/>
    </ligand>
</feature>
<feature type="binding site" evidence="1">
    <location>
        <position position="190"/>
    </location>
    <ligand>
        <name>Mg(2+)</name>
        <dbReference type="ChEBI" id="CHEBI:18420"/>
        <label>1</label>
    </ligand>
</feature>
<feature type="binding site" evidence="1">
    <location>
        <position position="190"/>
    </location>
    <ligand>
        <name>Mg(2+)</name>
        <dbReference type="ChEBI" id="CHEBI:18420"/>
        <label>2</label>
    </ligand>
</feature>
<feature type="binding site" evidence="1">
    <location>
        <position position="194"/>
    </location>
    <ligand>
        <name>Mg(2+)</name>
        <dbReference type="ChEBI" id="CHEBI:18420"/>
        <label>1</label>
    </ligand>
</feature>
<feature type="binding site" evidence="1">
    <location>
        <position position="226"/>
    </location>
    <ligand>
        <name>Mg(2+)</name>
        <dbReference type="ChEBI" id="CHEBI:18420"/>
        <label>2</label>
    </ligand>
</feature>
<feature type="binding site" evidence="1">
    <location>
        <position position="230"/>
    </location>
    <ligand>
        <name>Mg(2+)</name>
        <dbReference type="ChEBI" id="CHEBI:18420"/>
        <label>2</label>
    </ligand>
</feature>
<feature type="binding site" evidence="1">
    <location>
        <position position="251"/>
    </location>
    <ligand>
        <name>substrate</name>
    </ligand>
</feature>
<comment type="function">
    <text evidence="1">Involved in the biosynthesis of branched-chain amino acids (BCAA). Catalyzes an alkyl-migration followed by a ketol-acid reduction of (S)-2-acetolactate (S2AL) to yield (R)-2,3-dihydroxy-isovalerate. In the isomerase reaction, S2AL is rearranged via a Mg-dependent methyl migration to produce 3-hydroxy-3-methyl-2-ketobutyrate (HMKB). In the reductase reaction, this 2-ketoacid undergoes a metal-dependent reduction by NADPH to yield (R)-2,3-dihydroxy-isovalerate.</text>
</comment>
<comment type="catalytic activity">
    <reaction evidence="1">
        <text>(2R)-2,3-dihydroxy-3-methylbutanoate + NADP(+) = (2S)-2-acetolactate + NADPH + H(+)</text>
        <dbReference type="Rhea" id="RHEA:22068"/>
        <dbReference type="ChEBI" id="CHEBI:15378"/>
        <dbReference type="ChEBI" id="CHEBI:49072"/>
        <dbReference type="ChEBI" id="CHEBI:57783"/>
        <dbReference type="ChEBI" id="CHEBI:58349"/>
        <dbReference type="ChEBI" id="CHEBI:58476"/>
        <dbReference type="EC" id="1.1.1.86"/>
    </reaction>
</comment>
<comment type="catalytic activity">
    <reaction evidence="1">
        <text>(2R,3R)-2,3-dihydroxy-3-methylpentanoate + NADP(+) = (S)-2-ethyl-2-hydroxy-3-oxobutanoate + NADPH + H(+)</text>
        <dbReference type="Rhea" id="RHEA:13493"/>
        <dbReference type="ChEBI" id="CHEBI:15378"/>
        <dbReference type="ChEBI" id="CHEBI:49256"/>
        <dbReference type="ChEBI" id="CHEBI:49258"/>
        <dbReference type="ChEBI" id="CHEBI:57783"/>
        <dbReference type="ChEBI" id="CHEBI:58349"/>
        <dbReference type="EC" id="1.1.1.86"/>
    </reaction>
</comment>
<comment type="cofactor">
    <cofactor evidence="1">
        <name>Mg(2+)</name>
        <dbReference type="ChEBI" id="CHEBI:18420"/>
    </cofactor>
    <text evidence="1">Binds 2 magnesium ions per subunit.</text>
</comment>
<comment type="pathway">
    <text evidence="1">Amino-acid biosynthesis; L-isoleucine biosynthesis; L-isoleucine from 2-oxobutanoate: step 2/4.</text>
</comment>
<comment type="pathway">
    <text evidence="1">Amino-acid biosynthesis; L-valine biosynthesis; L-valine from pyruvate: step 2/4.</text>
</comment>
<comment type="similarity">
    <text evidence="1">Belongs to the ketol-acid reductoisomerase family.</text>
</comment>